<accession>P57725</accession>
<accession>Q2LE09</accession>
<accession>Q5RKU0</accession>
<accession>Q6P210</accession>
<accession>Q8C6S2</accession>
<dbReference type="EMBL" id="AF222928">
    <property type="protein sequence ID" value="AAG23356.1"/>
    <property type="molecule type" value="mRNA"/>
</dbReference>
<dbReference type="EMBL" id="DQ333189">
    <property type="protein sequence ID" value="ABC59720.1"/>
    <property type="molecule type" value="mRNA"/>
</dbReference>
<dbReference type="EMBL" id="AK053946">
    <property type="protein sequence ID" value="BAC35601.1"/>
    <property type="molecule type" value="mRNA"/>
</dbReference>
<dbReference type="EMBL" id="BC052906">
    <property type="protein sequence ID" value="AAH52906.1"/>
    <property type="molecule type" value="mRNA"/>
</dbReference>
<dbReference type="EMBL" id="BC064778">
    <property type="protein sequence ID" value="AAH64778.1"/>
    <property type="molecule type" value="mRNA"/>
</dbReference>
<dbReference type="CCDS" id="CCDS37378.1"/>
<dbReference type="RefSeq" id="NP_075869.2">
    <property type="nucleotide sequence ID" value="NM_023380.2"/>
</dbReference>
<dbReference type="PDB" id="1V38">
    <property type="method" value="NMR"/>
    <property type="chains" value="A=239-303"/>
</dbReference>
<dbReference type="PDBsum" id="1V38"/>
<dbReference type="SMR" id="P57725"/>
<dbReference type="BioGRID" id="212412">
    <property type="interactions" value="4"/>
</dbReference>
<dbReference type="FunCoup" id="P57725">
    <property type="interactions" value="1786"/>
</dbReference>
<dbReference type="STRING" id="10090.ENSMUSP00000109877"/>
<dbReference type="iPTMnet" id="P57725"/>
<dbReference type="PhosphoSitePlus" id="P57725"/>
<dbReference type="jPOST" id="P57725"/>
<dbReference type="PaxDb" id="10090-ENSMUSP00000109877"/>
<dbReference type="ProteomicsDB" id="256832"/>
<dbReference type="Antibodypedia" id="2139">
    <property type="antibodies" value="286 antibodies from 30 providers"/>
</dbReference>
<dbReference type="Ensembl" id="ENSMUST00000114239.9">
    <property type="protein sequence ID" value="ENSMUSP00000109877.3"/>
    <property type="gene ID" value="ENSMUSG00000022876.19"/>
</dbReference>
<dbReference type="GeneID" id="67742"/>
<dbReference type="KEGG" id="mmu:67742"/>
<dbReference type="UCSC" id="uc007zrs.1">
    <property type="organism name" value="mouse"/>
</dbReference>
<dbReference type="AGR" id="MGI:1914992"/>
<dbReference type="CTD" id="64092"/>
<dbReference type="MGI" id="MGI:1914992">
    <property type="gene designation" value="Samsn1"/>
</dbReference>
<dbReference type="VEuPathDB" id="HostDB:ENSMUSG00000022876"/>
<dbReference type="eggNOG" id="KOG4384">
    <property type="taxonomic scope" value="Eukaryota"/>
</dbReference>
<dbReference type="GeneTree" id="ENSGT00940000157806"/>
<dbReference type="HOGENOM" id="CLU_027875_0_0_1"/>
<dbReference type="InParanoid" id="P57725"/>
<dbReference type="OMA" id="TDMDLPH"/>
<dbReference type="OrthoDB" id="10047268at2759"/>
<dbReference type="TreeFam" id="TF350709"/>
<dbReference type="BioGRID-ORCS" id="67742">
    <property type="hits" value="2 hits in 77 CRISPR screens"/>
</dbReference>
<dbReference type="ChiTaRS" id="Samsn1">
    <property type="organism name" value="mouse"/>
</dbReference>
<dbReference type="EvolutionaryTrace" id="P57725"/>
<dbReference type="PRO" id="PR:P57725"/>
<dbReference type="Proteomes" id="UP000000589">
    <property type="component" value="Chromosome 16"/>
</dbReference>
<dbReference type="RNAct" id="P57725">
    <property type="molecule type" value="protein"/>
</dbReference>
<dbReference type="Bgee" id="ENSMUSG00000022876">
    <property type="expression patterns" value="Expressed in granulocyte and 110 other cell types or tissues"/>
</dbReference>
<dbReference type="GO" id="GO:0005737">
    <property type="term" value="C:cytoplasm"/>
    <property type="evidence" value="ECO:0000266"/>
    <property type="project" value="MGI"/>
</dbReference>
<dbReference type="GO" id="GO:0005829">
    <property type="term" value="C:cytosol"/>
    <property type="evidence" value="ECO:0000314"/>
    <property type="project" value="UniProtKB"/>
</dbReference>
<dbReference type="GO" id="GO:0005634">
    <property type="term" value="C:nucleus"/>
    <property type="evidence" value="ECO:0000314"/>
    <property type="project" value="UniProtKB"/>
</dbReference>
<dbReference type="GO" id="GO:0001726">
    <property type="term" value="C:ruffle"/>
    <property type="evidence" value="ECO:0007669"/>
    <property type="project" value="UniProtKB-SubCell"/>
</dbReference>
<dbReference type="GO" id="GO:0001784">
    <property type="term" value="F:phosphotyrosine residue binding"/>
    <property type="evidence" value="ECO:0000266"/>
    <property type="project" value="MGI"/>
</dbReference>
<dbReference type="GO" id="GO:0002820">
    <property type="term" value="P:negative regulation of adaptive immune response"/>
    <property type="evidence" value="ECO:0000315"/>
    <property type="project" value="UniProtKB"/>
</dbReference>
<dbReference type="GO" id="GO:0050869">
    <property type="term" value="P:negative regulation of B cell activation"/>
    <property type="evidence" value="ECO:0000315"/>
    <property type="project" value="UniProtKB"/>
</dbReference>
<dbReference type="GO" id="GO:0050732">
    <property type="term" value="P:negative regulation of peptidyl-tyrosine phosphorylation"/>
    <property type="evidence" value="ECO:0000315"/>
    <property type="project" value="UniProtKB"/>
</dbReference>
<dbReference type="CDD" id="cd09561">
    <property type="entry name" value="SAM_SAMSN1"/>
    <property type="match status" value="1"/>
</dbReference>
<dbReference type="FunFam" id="2.30.30.40:FF:000021">
    <property type="entry name" value="Putative sam and sh3 domain-containing protein 1"/>
    <property type="match status" value="1"/>
</dbReference>
<dbReference type="FunFam" id="1.10.150.50:FF:000045">
    <property type="entry name" value="SAM domain, SH3 domain and nuclear localization signals 1"/>
    <property type="match status" value="1"/>
</dbReference>
<dbReference type="Gene3D" id="2.30.30.40">
    <property type="entry name" value="SH3 Domains"/>
    <property type="match status" value="1"/>
</dbReference>
<dbReference type="Gene3D" id="1.10.150.50">
    <property type="entry name" value="Transcription Factor, Ets-1"/>
    <property type="match status" value="1"/>
</dbReference>
<dbReference type="InterPro" id="IPR001660">
    <property type="entry name" value="SAM"/>
</dbReference>
<dbReference type="InterPro" id="IPR051725">
    <property type="entry name" value="SAM-SH3_domain_protein"/>
</dbReference>
<dbReference type="InterPro" id="IPR013761">
    <property type="entry name" value="SAM/pointed_sf"/>
</dbReference>
<dbReference type="InterPro" id="IPR037623">
    <property type="entry name" value="SAMSN1_SAM"/>
</dbReference>
<dbReference type="InterPro" id="IPR036028">
    <property type="entry name" value="SH3-like_dom_sf"/>
</dbReference>
<dbReference type="InterPro" id="IPR001452">
    <property type="entry name" value="SH3_domain"/>
</dbReference>
<dbReference type="InterPro" id="IPR021090">
    <property type="entry name" value="SPIDER"/>
</dbReference>
<dbReference type="PANTHER" id="PTHR12301:SF4">
    <property type="entry name" value="SAM DOMAIN-CONTAINING PROTEIN SAMSN-1"/>
    <property type="match status" value="1"/>
</dbReference>
<dbReference type="PANTHER" id="PTHR12301">
    <property type="entry name" value="SAM-DOMAIN, SH3 AND NUCLEAR LOCALIZATION SIGNALS PROTEIN RELATED"/>
    <property type="match status" value="1"/>
</dbReference>
<dbReference type="Pfam" id="PF07647">
    <property type="entry name" value="SAM_2"/>
    <property type="match status" value="1"/>
</dbReference>
<dbReference type="Pfam" id="PF07653">
    <property type="entry name" value="SH3_2"/>
    <property type="match status" value="1"/>
</dbReference>
<dbReference type="Pfam" id="PF12485">
    <property type="entry name" value="SPIDER"/>
    <property type="match status" value="1"/>
</dbReference>
<dbReference type="SMART" id="SM00454">
    <property type="entry name" value="SAM"/>
    <property type="match status" value="1"/>
</dbReference>
<dbReference type="SMART" id="SM00326">
    <property type="entry name" value="SH3"/>
    <property type="match status" value="1"/>
</dbReference>
<dbReference type="SUPFAM" id="SSF47769">
    <property type="entry name" value="SAM/Pointed domain"/>
    <property type="match status" value="1"/>
</dbReference>
<dbReference type="SUPFAM" id="SSF50044">
    <property type="entry name" value="SH3-domain"/>
    <property type="match status" value="1"/>
</dbReference>
<dbReference type="PROSITE" id="PS50105">
    <property type="entry name" value="SAM_DOMAIN"/>
    <property type="match status" value="1"/>
</dbReference>
<dbReference type="PROSITE" id="PS50002">
    <property type="entry name" value="SH3"/>
    <property type="match status" value="1"/>
</dbReference>
<organism>
    <name type="scientific">Mus musculus</name>
    <name type="common">Mouse</name>
    <dbReference type="NCBI Taxonomy" id="10090"/>
    <lineage>
        <taxon>Eukaryota</taxon>
        <taxon>Metazoa</taxon>
        <taxon>Chordata</taxon>
        <taxon>Craniata</taxon>
        <taxon>Vertebrata</taxon>
        <taxon>Euteleostomi</taxon>
        <taxon>Mammalia</taxon>
        <taxon>Eutheria</taxon>
        <taxon>Euarchontoglires</taxon>
        <taxon>Glires</taxon>
        <taxon>Rodentia</taxon>
        <taxon>Myomorpha</taxon>
        <taxon>Muroidea</taxon>
        <taxon>Muridae</taxon>
        <taxon>Murinae</taxon>
        <taxon>Mus</taxon>
        <taxon>Mus</taxon>
    </lineage>
</organism>
<feature type="chain" id="PRO_0000097575" description="SAM domain-containing protein SAMSN-1">
    <location>
        <begin position="1"/>
        <end position="372"/>
    </location>
</feature>
<feature type="domain" description="SH3" evidence="4">
    <location>
        <begin position="163"/>
        <end position="224"/>
    </location>
</feature>
<feature type="domain" description="SAM" evidence="3">
    <location>
        <begin position="241"/>
        <end position="305"/>
    </location>
</feature>
<feature type="region of interest" description="Disordered" evidence="5">
    <location>
        <begin position="1"/>
        <end position="71"/>
    </location>
</feature>
<feature type="region of interest" description="Disordered" evidence="5">
    <location>
        <begin position="90"/>
        <end position="111"/>
    </location>
</feature>
<feature type="region of interest" description="Disordered" evidence="5">
    <location>
        <begin position="129"/>
        <end position="153"/>
    </location>
</feature>
<feature type="region of interest" description="Disordered" evidence="5">
    <location>
        <begin position="304"/>
        <end position="372"/>
    </location>
</feature>
<feature type="short sequence motif" description="Important for interaction with 14-3-3 proteins">
    <location>
        <begin position="20"/>
        <end position="25"/>
    </location>
</feature>
<feature type="compositionally biased region" description="Basic and acidic residues" evidence="5">
    <location>
        <begin position="37"/>
        <end position="49"/>
    </location>
</feature>
<feature type="compositionally biased region" description="Low complexity" evidence="5">
    <location>
        <begin position="52"/>
        <end position="63"/>
    </location>
</feature>
<feature type="compositionally biased region" description="Low complexity" evidence="5">
    <location>
        <begin position="129"/>
        <end position="146"/>
    </location>
</feature>
<feature type="compositionally biased region" description="Polar residues" evidence="5">
    <location>
        <begin position="317"/>
        <end position="329"/>
    </location>
</feature>
<feature type="modified residue" description="Phosphoserine" evidence="11">
    <location>
        <position position="23"/>
    </location>
</feature>
<feature type="modified residue" description="Phosphoserine" evidence="2">
    <location>
        <position position="34"/>
    </location>
</feature>
<feature type="modified residue" description="Phosphoserine" evidence="2">
    <location>
        <position position="74"/>
    </location>
</feature>
<feature type="modified residue" description="Phosphothreonine" evidence="2">
    <location>
        <position position="76"/>
    </location>
</feature>
<feature type="modified residue" description="Phosphoserine" evidence="12 14 15">
    <location>
        <position position="90"/>
    </location>
</feature>
<feature type="modified residue" description="Phosphoserine" evidence="15">
    <location>
        <position position="97"/>
    </location>
</feature>
<feature type="modified residue" description="Phosphoserine" evidence="2">
    <location>
        <position position="119"/>
    </location>
</feature>
<feature type="modified residue" description="Phosphotyrosine" evidence="13">
    <location>
        <position position="160"/>
    </location>
</feature>
<feature type="mutagenesis site" description="Loss of phosphorylation site. Strongly reduced interaction with YWHAG and YWHAB." evidence="8">
    <original>S</original>
    <variation>A</variation>
    <location>
        <position position="23"/>
    </location>
</feature>
<feature type="sequence conflict" description="In Ref. 1; AAG23356." evidence="10" ref="1">
    <original>MLKRKPSNASDKEKHQKPKRSS</original>
    <variation>MPQTRRNTKNRSAG</variation>
    <location>
        <begin position="1"/>
        <end position="22"/>
    </location>
</feature>
<feature type="sequence conflict" description="In Ref. 4; AAH52906." evidence="10" ref="4">
    <original>K</original>
    <variation>E</variation>
    <location>
        <position position="93"/>
    </location>
</feature>
<feature type="sequence conflict" description="In Ref. 4; AAH52906." evidence="10" ref="4">
    <original>F</original>
    <variation>L</variation>
    <location>
        <position position="164"/>
    </location>
</feature>
<feature type="sequence conflict" description="In Ref. 4; AAH64778." evidence="10" ref="4">
    <original>N</original>
    <variation>D</variation>
    <location>
        <position position="208"/>
    </location>
</feature>
<feature type="sequence conflict" description="In Ref. 1; AAG23356." evidence="10" ref="1">
    <original>L</original>
    <variation>S</variation>
    <location>
        <position position="223"/>
    </location>
</feature>
<feature type="sequence conflict" description="In Ref. 4; AAH52906." evidence="10" ref="4">
    <original>E</original>
    <variation>D</variation>
    <location>
        <position position="290"/>
    </location>
</feature>
<feature type="sequence conflict" description="In Ref. 4; AAH64778." evidence="10" ref="4">
    <original>S</original>
    <variation>T</variation>
    <location>
        <position position="320"/>
    </location>
</feature>
<feature type="helix" evidence="16">
    <location>
        <begin position="246"/>
        <end position="251"/>
    </location>
</feature>
<feature type="turn" evidence="16">
    <location>
        <begin position="252"/>
        <end position="254"/>
    </location>
</feature>
<feature type="helix" evidence="16">
    <location>
        <begin position="256"/>
        <end position="258"/>
    </location>
</feature>
<feature type="helix" evidence="16">
    <location>
        <begin position="259"/>
        <end position="265"/>
    </location>
</feature>
<feature type="helix" evidence="16">
    <location>
        <begin position="270"/>
        <end position="273"/>
    </location>
</feature>
<feature type="helix" evidence="16">
    <location>
        <begin position="278"/>
        <end position="283"/>
    </location>
</feature>
<feature type="turn" evidence="16">
    <location>
        <begin position="284"/>
        <end position="286"/>
    </location>
</feature>
<feature type="helix" evidence="16">
    <location>
        <begin position="289"/>
        <end position="303"/>
    </location>
</feature>
<proteinExistence type="evidence at protein level"/>
<sequence length="372" mass="41601">MLKRKPSNASDKEKHQKPKRSSSFGNFDRFRNNSVSKSDDSIEVHDRELTNGSEEQSKTSSSGGSLGKKVRAISWTMKKKVGKKYIKALSEEKEEESGEEALPYRNSDPMIGTHTEKISLKASDSMDSLYSGQSSSSGITSCSDGTSNRDSFRLDDDSPYSGPFCGRAKVHTDFTPSPYDTDSLKIKKGDIIDIICKTPMGMWTGMLNNKVGNFKFIYVDVILEEEAAPKKIKVPRSRRRENHQTIQEFLERIHLQEYTSTLLLNGYETLDDLKDIKESHLIELNIADPEDRARLLSAAESLLDEETTVEHEKESVPLSSNPDILSASQLEDCPRDSGCYISSENSDNGKEDLESENLSDMVQKIAITESSD</sequence>
<reference key="1">
    <citation type="submission" date="2000-01" db="EMBL/GenBank/DDBJ databases">
        <title>A mouse homologue of SAMSN1.</title>
        <authorList>
            <person name="Groet J."/>
            <person name="Blechschmidt K."/>
            <person name="Yaspo M.-L."/>
            <person name="Rosenthal A."/>
            <person name="Nizetic D."/>
        </authorList>
    </citation>
    <scope>NUCLEOTIDE SEQUENCE [MRNA]</scope>
</reference>
<reference key="2">
    <citation type="submission" date="2005-12" db="EMBL/GenBank/DDBJ databases">
        <title>SLy: a novel family of putative adaptor proteins in lymphocytes.</title>
        <authorList>
            <person name="von Holleben M."/>
            <person name="Kloeter S."/>
            <person name="Beer S."/>
        </authorList>
    </citation>
    <scope>NUCLEOTIDE SEQUENCE [MRNA]</scope>
    <source>
        <strain>C57BL/6J</strain>
    </source>
</reference>
<reference key="3">
    <citation type="journal article" date="2005" name="Science">
        <title>The transcriptional landscape of the mammalian genome.</title>
        <authorList>
            <person name="Carninci P."/>
            <person name="Kasukawa T."/>
            <person name="Katayama S."/>
            <person name="Gough J."/>
            <person name="Frith M.C."/>
            <person name="Maeda N."/>
            <person name="Oyama R."/>
            <person name="Ravasi T."/>
            <person name="Lenhard B."/>
            <person name="Wells C."/>
            <person name="Kodzius R."/>
            <person name="Shimokawa K."/>
            <person name="Bajic V.B."/>
            <person name="Brenner S.E."/>
            <person name="Batalov S."/>
            <person name="Forrest A.R."/>
            <person name="Zavolan M."/>
            <person name="Davis M.J."/>
            <person name="Wilming L.G."/>
            <person name="Aidinis V."/>
            <person name="Allen J.E."/>
            <person name="Ambesi-Impiombato A."/>
            <person name="Apweiler R."/>
            <person name="Aturaliya R.N."/>
            <person name="Bailey T.L."/>
            <person name="Bansal M."/>
            <person name="Baxter L."/>
            <person name="Beisel K.W."/>
            <person name="Bersano T."/>
            <person name="Bono H."/>
            <person name="Chalk A.M."/>
            <person name="Chiu K.P."/>
            <person name="Choudhary V."/>
            <person name="Christoffels A."/>
            <person name="Clutterbuck D.R."/>
            <person name="Crowe M.L."/>
            <person name="Dalla E."/>
            <person name="Dalrymple B.P."/>
            <person name="de Bono B."/>
            <person name="Della Gatta G."/>
            <person name="di Bernardo D."/>
            <person name="Down T."/>
            <person name="Engstrom P."/>
            <person name="Fagiolini M."/>
            <person name="Faulkner G."/>
            <person name="Fletcher C.F."/>
            <person name="Fukushima T."/>
            <person name="Furuno M."/>
            <person name="Futaki S."/>
            <person name="Gariboldi M."/>
            <person name="Georgii-Hemming P."/>
            <person name="Gingeras T.R."/>
            <person name="Gojobori T."/>
            <person name="Green R.E."/>
            <person name="Gustincich S."/>
            <person name="Harbers M."/>
            <person name="Hayashi Y."/>
            <person name="Hensch T.K."/>
            <person name="Hirokawa N."/>
            <person name="Hill D."/>
            <person name="Huminiecki L."/>
            <person name="Iacono M."/>
            <person name="Ikeo K."/>
            <person name="Iwama A."/>
            <person name="Ishikawa T."/>
            <person name="Jakt M."/>
            <person name="Kanapin A."/>
            <person name="Katoh M."/>
            <person name="Kawasawa Y."/>
            <person name="Kelso J."/>
            <person name="Kitamura H."/>
            <person name="Kitano H."/>
            <person name="Kollias G."/>
            <person name="Krishnan S.P."/>
            <person name="Kruger A."/>
            <person name="Kummerfeld S.K."/>
            <person name="Kurochkin I.V."/>
            <person name="Lareau L.F."/>
            <person name="Lazarevic D."/>
            <person name="Lipovich L."/>
            <person name="Liu J."/>
            <person name="Liuni S."/>
            <person name="McWilliam S."/>
            <person name="Madan Babu M."/>
            <person name="Madera M."/>
            <person name="Marchionni L."/>
            <person name="Matsuda H."/>
            <person name="Matsuzawa S."/>
            <person name="Miki H."/>
            <person name="Mignone F."/>
            <person name="Miyake S."/>
            <person name="Morris K."/>
            <person name="Mottagui-Tabar S."/>
            <person name="Mulder N."/>
            <person name="Nakano N."/>
            <person name="Nakauchi H."/>
            <person name="Ng P."/>
            <person name="Nilsson R."/>
            <person name="Nishiguchi S."/>
            <person name="Nishikawa S."/>
            <person name="Nori F."/>
            <person name="Ohara O."/>
            <person name="Okazaki Y."/>
            <person name="Orlando V."/>
            <person name="Pang K.C."/>
            <person name="Pavan W.J."/>
            <person name="Pavesi G."/>
            <person name="Pesole G."/>
            <person name="Petrovsky N."/>
            <person name="Piazza S."/>
            <person name="Reed J."/>
            <person name="Reid J.F."/>
            <person name="Ring B.Z."/>
            <person name="Ringwald M."/>
            <person name="Rost B."/>
            <person name="Ruan Y."/>
            <person name="Salzberg S.L."/>
            <person name="Sandelin A."/>
            <person name="Schneider C."/>
            <person name="Schoenbach C."/>
            <person name="Sekiguchi K."/>
            <person name="Semple C.A."/>
            <person name="Seno S."/>
            <person name="Sessa L."/>
            <person name="Sheng Y."/>
            <person name="Shibata Y."/>
            <person name="Shimada H."/>
            <person name="Shimada K."/>
            <person name="Silva D."/>
            <person name="Sinclair B."/>
            <person name="Sperling S."/>
            <person name="Stupka E."/>
            <person name="Sugiura K."/>
            <person name="Sultana R."/>
            <person name="Takenaka Y."/>
            <person name="Taki K."/>
            <person name="Tammoja K."/>
            <person name="Tan S.L."/>
            <person name="Tang S."/>
            <person name="Taylor M.S."/>
            <person name="Tegner J."/>
            <person name="Teichmann S.A."/>
            <person name="Ueda H.R."/>
            <person name="van Nimwegen E."/>
            <person name="Verardo R."/>
            <person name="Wei C.L."/>
            <person name="Yagi K."/>
            <person name="Yamanishi H."/>
            <person name="Zabarovsky E."/>
            <person name="Zhu S."/>
            <person name="Zimmer A."/>
            <person name="Hide W."/>
            <person name="Bult C."/>
            <person name="Grimmond S.M."/>
            <person name="Teasdale R.D."/>
            <person name="Liu E.T."/>
            <person name="Brusic V."/>
            <person name="Quackenbush J."/>
            <person name="Wahlestedt C."/>
            <person name="Mattick J.S."/>
            <person name="Hume D.A."/>
            <person name="Kai C."/>
            <person name="Sasaki D."/>
            <person name="Tomaru Y."/>
            <person name="Fukuda S."/>
            <person name="Kanamori-Katayama M."/>
            <person name="Suzuki M."/>
            <person name="Aoki J."/>
            <person name="Arakawa T."/>
            <person name="Iida J."/>
            <person name="Imamura K."/>
            <person name="Itoh M."/>
            <person name="Kato T."/>
            <person name="Kawaji H."/>
            <person name="Kawagashira N."/>
            <person name="Kawashima T."/>
            <person name="Kojima M."/>
            <person name="Kondo S."/>
            <person name="Konno H."/>
            <person name="Nakano K."/>
            <person name="Ninomiya N."/>
            <person name="Nishio T."/>
            <person name="Okada M."/>
            <person name="Plessy C."/>
            <person name="Shibata K."/>
            <person name="Shiraki T."/>
            <person name="Suzuki S."/>
            <person name="Tagami M."/>
            <person name="Waki K."/>
            <person name="Watahiki A."/>
            <person name="Okamura-Oho Y."/>
            <person name="Suzuki H."/>
            <person name="Kawai J."/>
            <person name="Hayashizaki Y."/>
        </authorList>
    </citation>
    <scope>NUCLEOTIDE SEQUENCE [LARGE SCALE MRNA]</scope>
    <source>
        <strain>C57BL/6J</strain>
        <tissue>Oviduct</tissue>
    </source>
</reference>
<reference key="4">
    <citation type="journal article" date="2004" name="Genome Res.">
        <title>The status, quality, and expansion of the NIH full-length cDNA project: the Mammalian Gene Collection (MGC).</title>
        <authorList>
            <consortium name="The MGC Project Team"/>
        </authorList>
    </citation>
    <scope>NUCLEOTIDE SEQUENCE [LARGE SCALE MRNA]</scope>
    <source>
        <strain>C57BL/6NCr</strain>
        <tissue>Hematopoietic stem cell</tissue>
    </source>
</reference>
<reference key="5">
    <citation type="journal article" date="2004" name="J. Exp. Med.">
        <title>The SH3-SAM adaptor HACS1 is up-regulated in B cell activation signaling cascades.</title>
        <authorList>
            <person name="Zhu Y.X."/>
            <person name="Benn S."/>
            <person name="Li Z.H."/>
            <person name="Wei E."/>
            <person name="Masih-Khan E."/>
            <person name="Trieu Y."/>
            <person name="Bali M."/>
            <person name="McGlade C.J."/>
            <person name="Claudio J.O."/>
            <person name="Stewart A.K."/>
        </authorList>
    </citation>
    <scope>FUNCTION</scope>
    <scope>INDUCTION BY IL4 AND LIPOPOLYSACCHARIDE</scope>
    <scope>SUBCELLULAR LOCATION</scope>
    <scope>SUBUNIT</scope>
    <scope>INTERACTION WITH TYROSINE PHOSPHORYLATED PROTEINS</scope>
    <scope>TISSUE SPECIFICITY</scope>
</reference>
<reference key="6">
    <citation type="journal article" date="2007" name="J. Immunol.">
        <title>Quantitative time-resolved phosphoproteomic analysis of mast cell signaling.</title>
        <authorList>
            <person name="Cao L."/>
            <person name="Yu K."/>
            <person name="Banh C."/>
            <person name="Nguyen V."/>
            <person name="Ritz A."/>
            <person name="Raphael B.J."/>
            <person name="Kawakami Y."/>
            <person name="Kawakami T."/>
            <person name="Salomon A.R."/>
        </authorList>
    </citation>
    <scope>PHOSPHORYLATION [LARGE SCALE ANALYSIS] AT TYR-160</scope>
    <scope>IDENTIFICATION BY MASS SPECTROMETRY [LARGE SCALE ANALYSIS]</scope>
    <source>
        <tissue>Mast cell</tissue>
    </source>
</reference>
<reference key="7">
    <citation type="journal article" date="2007" name="Proc. Natl. Acad. Sci. U.S.A.">
        <title>Large-scale phosphorylation analysis of mouse liver.</title>
        <authorList>
            <person name="Villen J."/>
            <person name="Beausoleil S.A."/>
            <person name="Gerber S.A."/>
            <person name="Gygi S.P."/>
        </authorList>
    </citation>
    <scope>PHOSPHORYLATION [LARGE SCALE ANALYSIS] AT SER-90</scope>
    <scope>IDENTIFICATION BY MASS SPECTROMETRY [LARGE SCALE ANALYSIS]</scope>
    <source>
        <tissue>Liver</tissue>
    </source>
</reference>
<reference key="8">
    <citation type="journal article" date="2009" name="Immunity">
        <title>The phagosomal proteome in interferon-gamma-activated macrophages.</title>
        <authorList>
            <person name="Trost M."/>
            <person name="English L."/>
            <person name="Lemieux S."/>
            <person name="Courcelles M."/>
            <person name="Desjardins M."/>
            <person name="Thibault P."/>
        </authorList>
    </citation>
    <scope>PHOSPHORYLATION [LARGE SCALE ANALYSIS] AT SER-90</scope>
    <scope>IDENTIFICATION BY MASS SPECTROMETRY [LARGE SCALE ANALYSIS]</scope>
</reference>
<reference key="9">
    <citation type="journal article" date="2010" name="Cell">
        <title>A tissue-specific atlas of mouse protein phosphorylation and expression.</title>
        <authorList>
            <person name="Huttlin E.L."/>
            <person name="Jedrychowski M.P."/>
            <person name="Elias J.E."/>
            <person name="Goswami T."/>
            <person name="Rad R."/>
            <person name="Beausoleil S.A."/>
            <person name="Villen J."/>
            <person name="Haas W."/>
            <person name="Sowa M.E."/>
            <person name="Gygi S.P."/>
        </authorList>
    </citation>
    <scope>PHOSPHORYLATION [LARGE SCALE ANALYSIS] AT SER-90 AND SER-97</scope>
    <scope>IDENTIFICATION BY MASS SPECTROMETRY [LARGE SCALE ANALYSIS]</scope>
    <source>
        <tissue>Spleen</tissue>
    </source>
</reference>
<reference key="10">
    <citation type="journal article" date="2010" name="FASEB J.">
        <title>Enhanced adaptive immunity in mice lacking the immunoinhibitory adaptor Hacs1.</title>
        <authorList>
            <person name="Wang D."/>
            <person name="Stewart A.K."/>
            <person name="Zhuang L."/>
            <person name="Zhu Y."/>
            <person name="Wang Y."/>
            <person name="Shi C."/>
            <person name="Keating A."/>
            <person name="Slutsky A."/>
            <person name="Zhang H."/>
            <person name="Wen X.Y."/>
        </authorList>
    </citation>
    <scope>DISRUPTION PHENOTYPE</scope>
    <scope>FUNCTION</scope>
</reference>
<reference key="11">
    <citation type="journal article" date="2010" name="Int. J. Biochem. Cell Biol.">
        <title>SLy2 targets the nuclear SAP30/HDAC1 complex.</title>
        <authorList>
            <person name="Brandt S."/>
            <person name="Ellwanger K."/>
            <person name="Beuter-Gunia C."/>
            <person name="Schuster M."/>
            <person name="Hausser A."/>
            <person name="Schmitz I."/>
            <person name="Beer-Hammer S."/>
        </authorList>
    </citation>
    <scope>FUNCTION</scope>
    <scope>SUBCELLULAR LOCATION</scope>
    <scope>PHOSPHORYLATION AT SER-23</scope>
    <scope>INTERACTION WITH SAP30; HDAC1; YWHAB; YWHAE; YWHAG; YWHAH; YWHAZ AND SFN</scope>
    <scope>SUBUNIT</scope>
    <scope>MUTAGENESIS OF SER-23</scope>
</reference>
<reference key="12">
    <citation type="journal article" date="2011" name="J. Biol. Chem.">
        <title>The immunoinhibitory adapter protein SRC homology domain 3 lymphocyte protein 2 (SLy2) regulates actin dynamics and B cell spreading.</title>
        <authorList>
            <person name="von Holleben M."/>
            <person name="Gohla A."/>
            <person name="Janssen K.P."/>
            <person name="Iritani B.M."/>
            <person name="Beer-Hammer S."/>
        </authorList>
    </citation>
    <scope>FUNCTION</scope>
    <scope>SUBCELLULAR LOCATION</scope>
    <scope>INTERACTION WITH CTTN</scope>
</reference>
<reference key="13">
    <citation type="submission" date="2004-04" db="PDB data bank">
        <title>Solution structure of the sterile alpha motif (SAM) domain of mouse SAMSN1.</title>
        <authorList>
            <consortium name="RIKEN structural genomics initiative (RSGI)"/>
        </authorList>
    </citation>
    <scope>STRUCTURE BY NMR OF 237-303</scope>
</reference>
<gene>
    <name type="primary">Samsn1</name>
</gene>
<name>SAMN1_MOUSE</name>
<evidence type="ECO:0000250" key="1"/>
<evidence type="ECO:0000250" key="2">
    <source>
        <dbReference type="UniProtKB" id="Q9NSI8"/>
    </source>
</evidence>
<evidence type="ECO:0000255" key="3">
    <source>
        <dbReference type="PROSITE-ProRule" id="PRU00184"/>
    </source>
</evidence>
<evidence type="ECO:0000255" key="4">
    <source>
        <dbReference type="PROSITE-ProRule" id="PRU00192"/>
    </source>
</evidence>
<evidence type="ECO:0000256" key="5">
    <source>
        <dbReference type="SAM" id="MobiDB-lite"/>
    </source>
</evidence>
<evidence type="ECO:0000269" key="6">
    <source>
    </source>
</evidence>
<evidence type="ECO:0000269" key="7">
    <source>
    </source>
</evidence>
<evidence type="ECO:0000269" key="8">
    <source>
    </source>
</evidence>
<evidence type="ECO:0000269" key="9">
    <source>
    </source>
</evidence>
<evidence type="ECO:0000305" key="10"/>
<evidence type="ECO:0000305" key="11">
    <source>
    </source>
</evidence>
<evidence type="ECO:0007744" key="12">
    <source>
    </source>
</evidence>
<evidence type="ECO:0007744" key="13">
    <source>
    </source>
</evidence>
<evidence type="ECO:0007744" key="14">
    <source>
    </source>
</evidence>
<evidence type="ECO:0007744" key="15">
    <source>
    </source>
</evidence>
<evidence type="ECO:0007829" key="16">
    <source>
        <dbReference type="PDB" id="1V38"/>
    </source>
</evidence>
<protein>
    <recommendedName>
        <fullName>SAM domain-containing protein SAMSN-1</fullName>
    </recommendedName>
    <alternativeName>
        <fullName>SAM domain, SH3 domain and nuclear localization signals protein 1</fullName>
    </alternativeName>
    <alternativeName>
        <fullName>SH3 protein expressed in lymphocytes 2</fullName>
    </alternativeName>
    <alternativeName>
        <fullName>SH3-lymphocyte protein 2</fullName>
        <shortName>SLy2</shortName>
    </alternativeName>
</protein>
<comment type="function">
    <text evidence="6 7 8 9">Negative regulator of B-cell activation. Down-regulates cell proliferation (in vitro). Promotes RAC1-dependent membrane ruffle formation and reorganization of the actin cytoskeleton. Regulates cell spreading and cell polarization. Stimulates HDAC1 activity. Regulates LYN activity by modulating its tyrosine phosphorylation.</text>
</comment>
<comment type="subunit">
    <text evidence="1 6 8 9">Interacts with FASLG (By similarity). Interacts with phosphotyrosine containing proteins. Interacts (via SH3 domain) with CTTN. Interacts (phosphorylated at Ser-23) with YWHAB, YWHAE, YWHAG, YWHAH, YWHAZ and SFN. Interacts directly with SAP30 and HDAC1. Identified in a complex with SAP30 and HDAC1.</text>
</comment>
<comment type="subcellular location">
    <subcellularLocation>
        <location>Nucleus</location>
    </subcellularLocation>
    <subcellularLocation>
        <location>Cytoplasm</location>
    </subcellularLocation>
    <subcellularLocation>
        <location>Cell projection</location>
        <location>Ruffle</location>
    </subcellularLocation>
    <text>Shuttles between cytoplasm and nucleus. Colocalizes with the actin cytoskeleton and actin-rich membrane ruffles.</text>
</comment>
<comment type="tissue specificity">
    <text evidence="6">Detected in spleen and lymph node (at protein level).</text>
</comment>
<comment type="induction">
    <text evidence="6">Up-regulated in peripheral blood B-cells by IL4 and bacterial lipopolysaccharide (LPS).</text>
</comment>
<comment type="disruption phenotype">
    <text evidence="7">No visible phenotype. Mice have normal bone marrow B-cell development and normal splenic T- and B-cell populations, but show an enhanced immune response upon immunization. Mice have constitutively activated Lyn, due to constitutive Lyn tyrosine phosphorylation.</text>
</comment>
<keyword id="KW-0002">3D-structure</keyword>
<keyword id="KW-0966">Cell projection</keyword>
<keyword id="KW-0963">Cytoplasm</keyword>
<keyword id="KW-0539">Nucleus</keyword>
<keyword id="KW-0597">Phosphoprotein</keyword>
<keyword id="KW-1185">Reference proteome</keyword>
<keyword id="KW-0728">SH3 domain</keyword>